<accession>Q5ZMW3</accession>
<sequence>MPTVEELYRNYGILADATETAGQHKDAYQVILDGVKGGAKEKRLAAQFIPKFFKHFPELADSAINAQLDLCEDEDVSIRRQAIKELPQFATGDNLPRVADILTQLLQSDDSAEFNLVNNALLSIFKMDAKGTLGGLFSQILQGEDIVRERAIKFLSTKLKTLPEEVLTKEVEEFILAESKKVLEDVTGEEFVLFMKILSGLKSLQTVSGRQQLVELVAEQADLEQTFNPSDPDCVDRLLQCTRQAVPLFSKNVHSTKFVTYFCEHVLPNLSALTTPVEGLDIQLEVLKLLAEMSSFCGDMEKLESNLKKLFDKLLEYMPLPPEEAENGENAGGEEPKLQFSYVECLLYSFHQLGRKLPDFLTAKLNAEKLKDFKIRLQYFARGLQVYIRQLRLALQGKTGEALKTEENKIKVVALKITNNINVLIKDLFHIPPSYKSTVTLSWKPVQKADANQKRTSEDTTSSSPPKKASAGPKRDARQIYNPPSGKYSSNLGSFSYEQRGGFRGGRGRGWGGRGNRSRGRIY</sequence>
<protein>
    <recommendedName>
        <fullName>Apoptosis inhibitor 5</fullName>
        <shortName>API-5</shortName>
    </recommendedName>
</protein>
<gene>
    <name type="primary">API5</name>
    <name type="ORF">RCJMB04_1a12</name>
</gene>
<dbReference type="EMBL" id="AJ719271">
    <property type="protein sequence ID" value="CAG30930.1"/>
    <property type="molecule type" value="mRNA"/>
</dbReference>
<dbReference type="RefSeq" id="NP_001006474.1">
    <property type="nucleotide sequence ID" value="NM_001006474.2"/>
</dbReference>
<dbReference type="SMR" id="Q5ZMW3"/>
<dbReference type="FunCoup" id="Q5ZMW3">
    <property type="interactions" value="3832"/>
</dbReference>
<dbReference type="STRING" id="9031.ENSGALP00000070843"/>
<dbReference type="PaxDb" id="9031-ENSGALP00000012938"/>
<dbReference type="GeneID" id="423168"/>
<dbReference type="KEGG" id="gga:423168"/>
<dbReference type="CTD" id="8539"/>
<dbReference type="VEuPathDB" id="HostDB:geneid_423168"/>
<dbReference type="eggNOG" id="KOG2213">
    <property type="taxonomic scope" value="Eukaryota"/>
</dbReference>
<dbReference type="HOGENOM" id="CLU_037809_1_0_1"/>
<dbReference type="InParanoid" id="Q5ZMW3"/>
<dbReference type="OMA" id="RCIKFLA"/>
<dbReference type="OrthoDB" id="19224at2759"/>
<dbReference type="PhylomeDB" id="Q5ZMW3"/>
<dbReference type="PRO" id="PR:Q5ZMW3"/>
<dbReference type="Proteomes" id="UP000000539">
    <property type="component" value="Chromosome 5"/>
</dbReference>
<dbReference type="Bgee" id="ENSGALG00000037968">
    <property type="expression patterns" value="Expressed in lung and 13 other cell types or tissues"/>
</dbReference>
<dbReference type="GO" id="GO:0005737">
    <property type="term" value="C:cytoplasm"/>
    <property type="evidence" value="ECO:0007669"/>
    <property type="project" value="UniProtKB-SubCell"/>
</dbReference>
<dbReference type="GO" id="GO:0005634">
    <property type="term" value="C:nucleus"/>
    <property type="evidence" value="ECO:0000318"/>
    <property type="project" value="GO_Central"/>
</dbReference>
<dbReference type="GO" id="GO:0017134">
    <property type="term" value="F:fibroblast growth factor binding"/>
    <property type="evidence" value="ECO:0000250"/>
    <property type="project" value="UniProtKB"/>
</dbReference>
<dbReference type="GO" id="GO:0003723">
    <property type="term" value="F:RNA binding"/>
    <property type="evidence" value="ECO:0000318"/>
    <property type="project" value="GO_Central"/>
</dbReference>
<dbReference type="GO" id="GO:0006915">
    <property type="term" value="P:apoptotic process"/>
    <property type="evidence" value="ECO:0007669"/>
    <property type="project" value="UniProtKB-KW"/>
</dbReference>
<dbReference type="GO" id="GO:0043066">
    <property type="term" value="P:negative regulation of apoptotic process"/>
    <property type="evidence" value="ECO:0000250"/>
    <property type="project" value="UniProtKB"/>
</dbReference>
<dbReference type="FunFam" id="1.25.10.10:FF:000092">
    <property type="entry name" value="apoptosis inhibitor 5 isoform X2"/>
    <property type="match status" value="1"/>
</dbReference>
<dbReference type="Gene3D" id="1.25.10.10">
    <property type="entry name" value="Leucine-rich Repeat Variant"/>
    <property type="match status" value="1"/>
</dbReference>
<dbReference type="InterPro" id="IPR008383">
    <property type="entry name" value="API5"/>
</dbReference>
<dbReference type="InterPro" id="IPR011989">
    <property type="entry name" value="ARM-like"/>
</dbReference>
<dbReference type="InterPro" id="IPR016024">
    <property type="entry name" value="ARM-type_fold"/>
</dbReference>
<dbReference type="PANTHER" id="PTHR12758:SF19">
    <property type="entry name" value="APOPTOSIS INHIBITOR 5"/>
    <property type="match status" value="1"/>
</dbReference>
<dbReference type="PANTHER" id="PTHR12758">
    <property type="entry name" value="APOPTOSIS INHIBITOR 5-RELATED"/>
    <property type="match status" value="1"/>
</dbReference>
<dbReference type="Pfam" id="PF05918">
    <property type="entry name" value="API5"/>
    <property type="match status" value="1"/>
</dbReference>
<dbReference type="SUPFAM" id="SSF48371">
    <property type="entry name" value="ARM repeat"/>
    <property type="match status" value="1"/>
</dbReference>
<evidence type="ECO:0000250" key="1"/>
<evidence type="ECO:0000256" key="2">
    <source>
        <dbReference type="SAM" id="MobiDB-lite"/>
    </source>
</evidence>
<evidence type="ECO:0000305" key="3"/>
<name>API5_CHICK</name>
<reference key="1">
    <citation type="journal article" date="2005" name="Genome Biol.">
        <title>Full-length cDNAs from chicken bursal lymphocytes to facilitate gene function analysis.</title>
        <authorList>
            <person name="Caldwell R.B."/>
            <person name="Kierzek A.M."/>
            <person name="Arakawa H."/>
            <person name="Bezzubov Y."/>
            <person name="Zaim J."/>
            <person name="Fiedler P."/>
            <person name="Kutter S."/>
            <person name="Blagodatski A."/>
            <person name="Kostovska D."/>
            <person name="Koter M."/>
            <person name="Plachy J."/>
            <person name="Carninci P."/>
            <person name="Hayashizaki Y."/>
            <person name="Buerstedde J.-M."/>
        </authorList>
    </citation>
    <scope>NUCLEOTIDE SEQUENCE [LARGE SCALE MRNA]</scope>
    <source>
        <strain>CB</strain>
        <tissue>Bursa of Fabricius</tissue>
    </source>
</reference>
<keyword id="KW-0053">Apoptosis</keyword>
<keyword id="KW-0963">Cytoplasm</keyword>
<keyword id="KW-0539">Nucleus</keyword>
<keyword id="KW-1185">Reference proteome</keyword>
<keyword id="KW-0677">Repeat</keyword>
<proteinExistence type="evidence at transcript level"/>
<organism>
    <name type="scientific">Gallus gallus</name>
    <name type="common">Chicken</name>
    <dbReference type="NCBI Taxonomy" id="9031"/>
    <lineage>
        <taxon>Eukaryota</taxon>
        <taxon>Metazoa</taxon>
        <taxon>Chordata</taxon>
        <taxon>Craniata</taxon>
        <taxon>Vertebrata</taxon>
        <taxon>Euteleostomi</taxon>
        <taxon>Archelosauria</taxon>
        <taxon>Archosauria</taxon>
        <taxon>Dinosauria</taxon>
        <taxon>Saurischia</taxon>
        <taxon>Theropoda</taxon>
        <taxon>Coelurosauria</taxon>
        <taxon>Aves</taxon>
        <taxon>Neognathae</taxon>
        <taxon>Galloanserae</taxon>
        <taxon>Galliformes</taxon>
        <taxon>Phasianidae</taxon>
        <taxon>Phasianinae</taxon>
        <taxon>Gallus</taxon>
    </lineage>
</organism>
<feature type="chain" id="PRO_0000064633" description="Apoptosis inhibitor 5">
    <location>
        <begin position="1"/>
        <end position="523"/>
    </location>
</feature>
<feature type="region of interest" description="ARM-like and Heat-like helical repeats" evidence="1">
    <location>
        <begin position="1"/>
        <end position="360"/>
    </location>
</feature>
<feature type="region of interest" description="Disordered" evidence="2">
    <location>
        <begin position="446"/>
        <end position="523"/>
    </location>
</feature>
<feature type="short sequence motif" description="Nuclear localization signal" evidence="1">
    <location>
        <begin position="454"/>
        <end position="475"/>
    </location>
</feature>
<feature type="compositionally biased region" description="Low complexity" evidence="2">
    <location>
        <begin position="460"/>
        <end position="471"/>
    </location>
</feature>
<feature type="compositionally biased region" description="Polar residues" evidence="2">
    <location>
        <begin position="487"/>
        <end position="497"/>
    </location>
</feature>
<feature type="compositionally biased region" description="Gly residues" evidence="2">
    <location>
        <begin position="502"/>
        <end position="515"/>
    </location>
</feature>
<comment type="function">
    <text evidence="1">Antiapoptotic factor that may have a role in protein assembly.</text>
</comment>
<comment type="subunit">
    <text evidence="1">Monomer.</text>
</comment>
<comment type="subcellular location">
    <subcellularLocation>
        <location evidence="1">Nucleus</location>
    </subcellularLocation>
    <subcellularLocation>
        <location evidence="1">Cytoplasm</location>
    </subcellularLocation>
    <text>Mainly nuclear.</text>
</comment>
<comment type="similarity">
    <text evidence="3">Belongs to the API5 family.</text>
</comment>